<gene>
    <name evidence="1" type="primary">atpH</name>
    <name type="ordered locus">BMEA_A1852</name>
</gene>
<evidence type="ECO:0000255" key="1">
    <source>
        <dbReference type="HAMAP-Rule" id="MF_01416"/>
    </source>
</evidence>
<protein>
    <recommendedName>
        <fullName evidence="1">ATP synthase subunit delta</fullName>
    </recommendedName>
    <alternativeName>
        <fullName evidence="1">ATP synthase F(1) sector subunit delta</fullName>
    </alternativeName>
    <alternativeName>
        <fullName evidence="1">F-type ATPase subunit delta</fullName>
        <shortName evidence="1">F-ATPase subunit delta</shortName>
    </alternativeName>
</protein>
<dbReference type="EMBL" id="CP001488">
    <property type="protein sequence ID" value="ACO01525.1"/>
    <property type="molecule type" value="Genomic_DNA"/>
</dbReference>
<dbReference type="RefSeq" id="WP_004684267.1">
    <property type="nucleotide sequence ID" value="NC_012441.1"/>
</dbReference>
<dbReference type="SMR" id="C0RF53"/>
<dbReference type="KEGG" id="bmi:BMEA_A1852"/>
<dbReference type="HOGENOM" id="CLU_085114_0_1_5"/>
<dbReference type="Proteomes" id="UP000001748">
    <property type="component" value="Chromosome I"/>
</dbReference>
<dbReference type="GO" id="GO:0005886">
    <property type="term" value="C:plasma membrane"/>
    <property type="evidence" value="ECO:0007669"/>
    <property type="project" value="UniProtKB-SubCell"/>
</dbReference>
<dbReference type="GO" id="GO:0045259">
    <property type="term" value="C:proton-transporting ATP synthase complex"/>
    <property type="evidence" value="ECO:0007669"/>
    <property type="project" value="UniProtKB-KW"/>
</dbReference>
<dbReference type="GO" id="GO:0046933">
    <property type="term" value="F:proton-transporting ATP synthase activity, rotational mechanism"/>
    <property type="evidence" value="ECO:0007669"/>
    <property type="project" value="UniProtKB-UniRule"/>
</dbReference>
<dbReference type="Gene3D" id="1.10.520.20">
    <property type="entry name" value="N-terminal domain of the delta subunit of the F1F0-ATP synthase"/>
    <property type="match status" value="1"/>
</dbReference>
<dbReference type="HAMAP" id="MF_01416">
    <property type="entry name" value="ATP_synth_delta_bact"/>
    <property type="match status" value="1"/>
</dbReference>
<dbReference type="InterPro" id="IPR026015">
    <property type="entry name" value="ATP_synth_OSCP/delta_N_sf"/>
</dbReference>
<dbReference type="InterPro" id="IPR020781">
    <property type="entry name" value="ATPase_OSCP/d_CS"/>
</dbReference>
<dbReference type="InterPro" id="IPR000711">
    <property type="entry name" value="ATPase_OSCP/dsu"/>
</dbReference>
<dbReference type="NCBIfam" id="TIGR01145">
    <property type="entry name" value="ATP_synt_delta"/>
    <property type="match status" value="1"/>
</dbReference>
<dbReference type="NCBIfam" id="NF004406">
    <property type="entry name" value="PRK05758.3-2"/>
    <property type="match status" value="1"/>
</dbReference>
<dbReference type="PANTHER" id="PTHR11910">
    <property type="entry name" value="ATP SYNTHASE DELTA CHAIN"/>
    <property type="match status" value="1"/>
</dbReference>
<dbReference type="Pfam" id="PF00213">
    <property type="entry name" value="OSCP"/>
    <property type="match status" value="1"/>
</dbReference>
<dbReference type="PRINTS" id="PR00125">
    <property type="entry name" value="ATPASEDELTA"/>
</dbReference>
<dbReference type="SUPFAM" id="SSF47928">
    <property type="entry name" value="N-terminal domain of the delta subunit of the F1F0-ATP synthase"/>
    <property type="match status" value="1"/>
</dbReference>
<dbReference type="PROSITE" id="PS00389">
    <property type="entry name" value="ATPASE_DELTA"/>
    <property type="match status" value="1"/>
</dbReference>
<name>ATPD_BRUMB</name>
<organism>
    <name type="scientific">Brucella melitensis biotype 2 (strain ATCC 23457)</name>
    <dbReference type="NCBI Taxonomy" id="546272"/>
    <lineage>
        <taxon>Bacteria</taxon>
        <taxon>Pseudomonadati</taxon>
        <taxon>Pseudomonadota</taxon>
        <taxon>Alphaproteobacteria</taxon>
        <taxon>Hyphomicrobiales</taxon>
        <taxon>Brucellaceae</taxon>
        <taxon>Brucella/Ochrobactrum group</taxon>
        <taxon>Brucella</taxon>
    </lineage>
</organism>
<comment type="function">
    <text evidence="1">F(1)F(0) ATP synthase produces ATP from ADP in the presence of a proton or sodium gradient. F-type ATPases consist of two structural domains, F(1) containing the extramembraneous catalytic core and F(0) containing the membrane proton channel, linked together by a central stalk and a peripheral stalk. During catalysis, ATP synthesis in the catalytic domain of F(1) is coupled via a rotary mechanism of the central stalk subunits to proton translocation.</text>
</comment>
<comment type="function">
    <text evidence="1">This protein is part of the stalk that links CF(0) to CF(1). It either transmits conformational changes from CF(0) to CF(1) or is implicated in proton conduction.</text>
</comment>
<comment type="subunit">
    <text evidence="1">F-type ATPases have 2 components, F(1) - the catalytic core - and F(0) - the membrane proton channel. F(1) has five subunits: alpha(3), beta(3), gamma(1), delta(1), epsilon(1). F(0) has three main subunits: a(1), b(2) and c(10-14). The alpha and beta chains form an alternating ring which encloses part of the gamma chain. F(1) is attached to F(0) by a central stalk formed by the gamma and epsilon chains, while a peripheral stalk is formed by the delta and b chains.</text>
</comment>
<comment type="subcellular location">
    <subcellularLocation>
        <location evidence="1">Cell inner membrane</location>
        <topology evidence="1">Peripheral membrane protein</topology>
    </subcellularLocation>
</comment>
<comment type="similarity">
    <text evidence="1">Belongs to the ATPase delta chain family.</text>
</comment>
<accession>C0RF53</accession>
<feature type="chain" id="PRO_1000184660" description="ATP synthase subunit delta">
    <location>
        <begin position="1"/>
        <end position="186"/>
    </location>
</feature>
<sequence length="186" mass="19564">MAETSSLISGVAQRCAGSLFELALDANSVASVEKDLGRFEALLSGSEDLRRLISSPVFSSEDQLHAIGAIADKAGIKGLVGNFLRVVAQNRRLFALPGIIAAFRQIAAEHRGEISADVVSAHELTSAQQNELKATLKGVAGKDVTINVTVDPSILGGLIVKMGSRQIDTSLRTKLSSLKLALKEVG</sequence>
<keyword id="KW-0066">ATP synthesis</keyword>
<keyword id="KW-0997">Cell inner membrane</keyword>
<keyword id="KW-1003">Cell membrane</keyword>
<keyword id="KW-0139">CF(1)</keyword>
<keyword id="KW-0375">Hydrogen ion transport</keyword>
<keyword id="KW-0406">Ion transport</keyword>
<keyword id="KW-0472">Membrane</keyword>
<keyword id="KW-0813">Transport</keyword>
<proteinExistence type="inferred from homology"/>
<reference key="1">
    <citation type="submission" date="2009-03" db="EMBL/GenBank/DDBJ databases">
        <title>Brucella melitensis ATCC 23457 whole genome shotgun sequencing project.</title>
        <authorList>
            <person name="Setubal J.C."/>
            <person name="Boyle S."/>
            <person name="Crasta O.R."/>
            <person name="Gillespie J.J."/>
            <person name="Kenyon R.W."/>
            <person name="Lu J."/>
            <person name="Mane S."/>
            <person name="Nagrani S."/>
            <person name="Shallom J.M."/>
            <person name="Shallom S."/>
            <person name="Shukla M."/>
            <person name="Snyder E.E."/>
            <person name="Sobral B.W."/>
            <person name="Wattam A.R."/>
            <person name="Will R."/>
            <person name="Williams K."/>
            <person name="Yoo H."/>
            <person name="Munk C."/>
            <person name="Tapia R."/>
            <person name="Han C."/>
            <person name="Detter J.C."/>
            <person name="Bruce D."/>
            <person name="Brettin T.S."/>
        </authorList>
    </citation>
    <scope>NUCLEOTIDE SEQUENCE [LARGE SCALE GENOMIC DNA]</scope>
    <source>
        <strain>ATCC 23457</strain>
    </source>
</reference>